<proteinExistence type="inferred from homology"/>
<dbReference type="EC" id="3.6.4.-" evidence="1"/>
<dbReference type="EMBL" id="BX908798">
    <property type="protein sequence ID" value="CAF23832.1"/>
    <property type="molecule type" value="Genomic_DNA"/>
</dbReference>
<dbReference type="RefSeq" id="WP_011175658.1">
    <property type="nucleotide sequence ID" value="NC_005861.2"/>
</dbReference>
<dbReference type="SMR" id="Q6MC67"/>
<dbReference type="STRING" id="264201.pc1108"/>
<dbReference type="KEGG" id="pcu:PC_RS05350"/>
<dbReference type="eggNOG" id="COG2255">
    <property type="taxonomic scope" value="Bacteria"/>
</dbReference>
<dbReference type="HOGENOM" id="CLU_055599_1_0_0"/>
<dbReference type="OrthoDB" id="9804478at2"/>
<dbReference type="Proteomes" id="UP000000529">
    <property type="component" value="Chromosome"/>
</dbReference>
<dbReference type="GO" id="GO:0005737">
    <property type="term" value="C:cytoplasm"/>
    <property type="evidence" value="ECO:0007669"/>
    <property type="project" value="UniProtKB-SubCell"/>
</dbReference>
<dbReference type="GO" id="GO:0048476">
    <property type="term" value="C:Holliday junction resolvase complex"/>
    <property type="evidence" value="ECO:0007669"/>
    <property type="project" value="UniProtKB-UniRule"/>
</dbReference>
<dbReference type="GO" id="GO:0005524">
    <property type="term" value="F:ATP binding"/>
    <property type="evidence" value="ECO:0007669"/>
    <property type="project" value="UniProtKB-UniRule"/>
</dbReference>
<dbReference type="GO" id="GO:0016887">
    <property type="term" value="F:ATP hydrolysis activity"/>
    <property type="evidence" value="ECO:0007669"/>
    <property type="project" value="InterPro"/>
</dbReference>
<dbReference type="GO" id="GO:0000400">
    <property type="term" value="F:four-way junction DNA binding"/>
    <property type="evidence" value="ECO:0007669"/>
    <property type="project" value="UniProtKB-UniRule"/>
</dbReference>
<dbReference type="GO" id="GO:0009378">
    <property type="term" value="F:four-way junction helicase activity"/>
    <property type="evidence" value="ECO:0007669"/>
    <property type="project" value="InterPro"/>
</dbReference>
<dbReference type="GO" id="GO:0006310">
    <property type="term" value="P:DNA recombination"/>
    <property type="evidence" value="ECO:0007669"/>
    <property type="project" value="UniProtKB-UniRule"/>
</dbReference>
<dbReference type="GO" id="GO:0006281">
    <property type="term" value="P:DNA repair"/>
    <property type="evidence" value="ECO:0007669"/>
    <property type="project" value="UniProtKB-UniRule"/>
</dbReference>
<dbReference type="CDD" id="cd00009">
    <property type="entry name" value="AAA"/>
    <property type="match status" value="1"/>
</dbReference>
<dbReference type="Gene3D" id="1.10.8.60">
    <property type="match status" value="1"/>
</dbReference>
<dbReference type="Gene3D" id="3.40.50.300">
    <property type="entry name" value="P-loop containing nucleotide triphosphate hydrolases"/>
    <property type="match status" value="1"/>
</dbReference>
<dbReference type="Gene3D" id="1.10.10.10">
    <property type="entry name" value="Winged helix-like DNA-binding domain superfamily/Winged helix DNA-binding domain"/>
    <property type="match status" value="1"/>
</dbReference>
<dbReference type="HAMAP" id="MF_00016">
    <property type="entry name" value="DNA_HJ_migration_RuvB"/>
    <property type="match status" value="1"/>
</dbReference>
<dbReference type="InterPro" id="IPR003593">
    <property type="entry name" value="AAA+_ATPase"/>
</dbReference>
<dbReference type="InterPro" id="IPR041445">
    <property type="entry name" value="AAA_lid_4"/>
</dbReference>
<dbReference type="InterPro" id="IPR004605">
    <property type="entry name" value="DNA_helicase_Holl-junc_RuvB"/>
</dbReference>
<dbReference type="InterPro" id="IPR027417">
    <property type="entry name" value="P-loop_NTPase"/>
</dbReference>
<dbReference type="InterPro" id="IPR008824">
    <property type="entry name" value="RuvB-like_N"/>
</dbReference>
<dbReference type="InterPro" id="IPR008823">
    <property type="entry name" value="RuvB_C"/>
</dbReference>
<dbReference type="InterPro" id="IPR036388">
    <property type="entry name" value="WH-like_DNA-bd_sf"/>
</dbReference>
<dbReference type="InterPro" id="IPR036390">
    <property type="entry name" value="WH_DNA-bd_sf"/>
</dbReference>
<dbReference type="NCBIfam" id="NF000868">
    <property type="entry name" value="PRK00080.1"/>
    <property type="match status" value="1"/>
</dbReference>
<dbReference type="NCBIfam" id="TIGR00635">
    <property type="entry name" value="ruvB"/>
    <property type="match status" value="1"/>
</dbReference>
<dbReference type="PANTHER" id="PTHR42848">
    <property type="match status" value="1"/>
</dbReference>
<dbReference type="PANTHER" id="PTHR42848:SF1">
    <property type="entry name" value="HOLLIDAY JUNCTION BRANCH MIGRATION COMPLEX SUBUNIT RUVB"/>
    <property type="match status" value="1"/>
</dbReference>
<dbReference type="Pfam" id="PF17864">
    <property type="entry name" value="AAA_lid_4"/>
    <property type="match status" value="1"/>
</dbReference>
<dbReference type="Pfam" id="PF05491">
    <property type="entry name" value="RuvB_C"/>
    <property type="match status" value="1"/>
</dbReference>
<dbReference type="Pfam" id="PF05496">
    <property type="entry name" value="RuvB_N"/>
    <property type="match status" value="1"/>
</dbReference>
<dbReference type="SMART" id="SM00382">
    <property type="entry name" value="AAA"/>
    <property type="match status" value="1"/>
</dbReference>
<dbReference type="SUPFAM" id="SSF52540">
    <property type="entry name" value="P-loop containing nucleoside triphosphate hydrolases"/>
    <property type="match status" value="1"/>
</dbReference>
<dbReference type="SUPFAM" id="SSF46785">
    <property type="entry name" value="Winged helix' DNA-binding domain"/>
    <property type="match status" value="1"/>
</dbReference>
<keyword id="KW-0067">ATP-binding</keyword>
<keyword id="KW-0963">Cytoplasm</keyword>
<keyword id="KW-0227">DNA damage</keyword>
<keyword id="KW-0233">DNA recombination</keyword>
<keyword id="KW-0234">DNA repair</keyword>
<keyword id="KW-0238">DNA-binding</keyword>
<keyword id="KW-0378">Hydrolase</keyword>
<keyword id="KW-0547">Nucleotide-binding</keyword>
<keyword id="KW-1185">Reference proteome</keyword>
<organism>
    <name type="scientific">Protochlamydia amoebophila (strain UWE25)</name>
    <dbReference type="NCBI Taxonomy" id="264201"/>
    <lineage>
        <taxon>Bacteria</taxon>
        <taxon>Pseudomonadati</taxon>
        <taxon>Chlamydiota</taxon>
        <taxon>Chlamydiia</taxon>
        <taxon>Parachlamydiales</taxon>
        <taxon>Parachlamydiaceae</taxon>
        <taxon>Candidatus Protochlamydia</taxon>
    </lineage>
</organism>
<accession>Q6MC67</accession>
<comment type="function">
    <text evidence="1">The RuvA-RuvB-RuvC complex processes Holliday junction (HJ) DNA during genetic recombination and DNA repair, while the RuvA-RuvB complex plays an important role in the rescue of blocked DNA replication forks via replication fork reversal (RFR). RuvA specifically binds to HJ cruciform DNA, conferring on it an open structure. The RuvB hexamer acts as an ATP-dependent pump, pulling dsDNA into and through the RuvAB complex. RuvB forms 2 homohexamers on either side of HJ DNA bound by 1 or 2 RuvA tetramers; 4 subunits per hexamer contact DNA at a time. Coordinated motions by a converter formed by DNA-disengaged RuvB subunits stimulates ATP hydrolysis and nucleotide exchange. Immobilization of the converter enables RuvB to convert the ATP-contained energy into a lever motion, pulling 2 nucleotides of DNA out of the RuvA tetramer per ATP hydrolyzed, thus driving DNA branch migration. The RuvB motors rotate together with the DNA substrate, which together with the progressing nucleotide cycle form the mechanistic basis for DNA recombination by continuous HJ branch migration. Branch migration allows RuvC to scan DNA until it finds its consensus sequence, where it cleaves and resolves cruciform DNA.</text>
</comment>
<comment type="catalytic activity">
    <reaction evidence="1">
        <text>ATP + H2O = ADP + phosphate + H(+)</text>
        <dbReference type="Rhea" id="RHEA:13065"/>
        <dbReference type="ChEBI" id="CHEBI:15377"/>
        <dbReference type="ChEBI" id="CHEBI:15378"/>
        <dbReference type="ChEBI" id="CHEBI:30616"/>
        <dbReference type="ChEBI" id="CHEBI:43474"/>
        <dbReference type="ChEBI" id="CHEBI:456216"/>
    </reaction>
</comment>
<comment type="subunit">
    <text evidence="1">Homohexamer. Forms an RuvA(8)-RuvB(12)-Holliday junction (HJ) complex. HJ DNA is sandwiched between 2 RuvA tetramers; dsDNA enters through RuvA and exits via RuvB. An RuvB hexamer assembles on each DNA strand where it exits the tetramer. Each RuvB hexamer is contacted by two RuvA subunits (via domain III) on 2 adjacent RuvB subunits; this complex drives branch migration. In the full resolvosome a probable DNA-RuvA(4)-RuvB(12)-RuvC(2) complex forms which resolves the HJ.</text>
</comment>
<comment type="subcellular location">
    <subcellularLocation>
        <location evidence="1">Cytoplasm</location>
    </subcellularLocation>
</comment>
<comment type="domain">
    <text evidence="1">Has 3 domains, the large (RuvB-L) and small ATPase (RuvB-S) domains and the C-terminal head (RuvB-H) domain. The head domain binds DNA, while the ATPase domains jointly bind ATP, ADP or are empty depending on the state of the subunit in the translocation cycle. During a single DNA translocation step the structure of each domain remains the same, but their relative positions change.</text>
</comment>
<comment type="similarity">
    <text evidence="1">Belongs to the RuvB family.</text>
</comment>
<sequence>MNKNFIESNLNKQELSFEVPLRPQCLTDFVGQDSIRDRLEVHIGAARQRGEVLGHCLFSGPPGLGKTTLASILSKAMESNLVLTSGPVIEKAGDLAGILTSLKTGDVLFIDEIHRLNRSVEEYLYQAMEDFALDLMIDSGPNARSIQVKLNQFTLAGATTRLGLLSEPLRSRFAFTCRLEYYDPMILQKILLRTSRILNVKIDSEAALEIAKRSRGTPRVANHLLRWVRDFAQIKANNYIDLSVANRALTMLSIDEKGLDEMDKKMLQTMIDHYSGGPVGINAIAASIGEEPSTVEEVYEPYLILQGLLKRTPRGREVTSLGYQHIVGSSQR</sequence>
<gene>
    <name evidence="1" type="primary">ruvB</name>
    <name type="ordered locus">pc1108</name>
</gene>
<evidence type="ECO:0000255" key="1">
    <source>
        <dbReference type="HAMAP-Rule" id="MF_00016"/>
    </source>
</evidence>
<reference key="1">
    <citation type="journal article" date="2004" name="Science">
        <title>Illuminating the evolutionary history of chlamydiae.</title>
        <authorList>
            <person name="Horn M."/>
            <person name="Collingro A."/>
            <person name="Schmitz-Esser S."/>
            <person name="Beier C.L."/>
            <person name="Purkhold U."/>
            <person name="Fartmann B."/>
            <person name="Brandt P."/>
            <person name="Nyakatura G.J."/>
            <person name="Droege M."/>
            <person name="Frishman D."/>
            <person name="Rattei T."/>
            <person name="Mewes H.-W."/>
            <person name="Wagner M."/>
        </authorList>
    </citation>
    <scope>NUCLEOTIDE SEQUENCE [LARGE SCALE GENOMIC DNA]</scope>
    <source>
        <strain>UWE25</strain>
    </source>
</reference>
<name>RUVB_PARUW</name>
<protein>
    <recommendedName>
        <fullName evidence="1">Holliday junction branch migration complex subunit RuvB</fullName>
        <ecNumber evidence="1">3.6.4.-</ecNumber>
    </recommendedName>
</protein>
<feature type="chain" id="PRO_0000165569" description="Holliday junction branch migration complex subunit RuvB">
    <location>
        <begin position="1"/>
        <end position="332"/>
    </location>
</feature>
<feature type="region of interest" description="Large ATPase domain (RuvB-L)" evidence="1">
    <location>
        <begin position="1"/>
        <end position="182"/>
    </location>
</feature>
<feature type="region of interest" description="Small ATPAse domain (RuvB-S)" evidence="1">
    <location>
        <begin position="183"/>
        <end position="253"/>
    </location>
</feature>
<feature type="region of interest" description="Head domain (RuvB-H)" evidence="1">
    <location>
        <begin position="256"/>
        <end position="332"/>
    </location>
</feature>
<feature type="binding site" evidence="1">
    <location>
        <position position="21"/>
    </location>
    <ligand>
        <name>ATP</name>
        <dbReference type="ChEBI" id="CHEBI:30616"/>
    </ligand>
</feature>
<feature type="binding site" evidence="1">
    <location>
        <position position="22"/>
    </location>
    <ligand>
        <name>ATP</name>
        <dbReference type="ChEBI" id="CHEBI:30616"/>
    </ligand>
</feature>
<feature type="binding site" evidence="1">
    <location>
        <position position="63"/>
    </location>
    <ligand>
        <name>ATP</name>
        <dbReference type="ChEBI" id="CHEBI:30616"/>
    </ligand>
</feature>
<feature type="binding site" evidence="1">
    <location>
        <position position="66"/>
    </location>
    <ligand>
        <name>ATP</name>
        <dbReference type="ChEBI" id="CHEBI:30616"/>
    </ligand>
</feature>
<feature type="binding site" evidence="1">
    <location>
        <position position="67"/>
    </location>
    <ligand>
        <name>ATP</name>
        <dbReference type="ChEBI" id="CHEBI:30616"/>
    </ligand>
</feature>
<feature type="binding site" evidence="1">
    <location>
        <position position="67"/>
    </location>
    <ligand>
        <name>Mg(2+)</name>
        <dbReference type="ChEBI" id="CHEBI:18420"/>
    </ligand>
</feature>
<feature type="binding site" evidence="1">
    <location>
        <position position="68"/>
    </location>
    <ligand>
        <name>ATP</name>
        <dbReference type="ChEBI" id="CHEBI:30616"/>
    </ligand>
</feature>
<feature type="binding site" evidence="1">
    <location>
        <begin position="129"/>
        <end position="131"/>
    </location>
    <ligand>
        <name>ATP</name>
        <dbReference type="ChEBI" id="CHEBI:30616"/>
    </ligand>
</feature>
<feature type="binding site" evidence="1">
    <location>
        <position position="172"/>
    </location>
    <ligand>
        <name>ATP</name>
        <dbReference type="ChEBI" id="CHEBI:30616"/>
    </ligand>
</feature>
<feature type="binding site" evidence="1">
    <location>
        <position position="182"/>
    </location>
    <ligand>
        <name>ATP</name>
        <dbReference type="ChEBI" id="CHEBI:30616"/>
    </ligand>
</feature>
<feature type="binding site" evidence="1">
    <location>
        <position position="219"/>
    </location>
    <ligand>
        <name>ATP</name>
        <dbReference type="ChEBI" id="CHEBI:30616"/>
    </ligand>
</feature>
<feature type="binding site" evidence="1">
    <location>
        <position position="311"/>
    </location>
    <ligand>
        <name>DNA</name>
        <dbReference type="ChEBI" id="CHEBI:16991"/>
    </ligand>
</feature>
<feature type="binding site" evidence="1">
    <location>
        <position position="316"/>
    </location>
    <ligand>
        <name>DNA</name>
        <dbReference type="ChEBI" id="CHEBI:16991"/>
    </ligand>
</feature>